<evidence type="ECO:0000305" key="1"/>
<keyword id="KW-0560">Oxidoreductase</keyword>
<keyword id="KW-0712">Selenocysteine</keyword>
<gene>
    <name type="primary">grdB</name>
</gene>
<dbReference type="EC" id="1.21.4.2"/>
<dbReference type="EMBL" id="U24268">
    <property type="protein sequence ID" value="AAC43574.2"/>
    <property type="molecule type" value="Genomic_DNA"/>
</dbReference>
<dbReference type="PIR" id="S63988">
    <property type="entry name" value="S63988"/>
</dbReference>
<dbReference type="GO" id="GO:0030700">
    <property type="term" value="C:glycine reductase complex"/>
    <property type="evidence" value="ECO:0007669"/>
    <property type="project" value="InterPro"/>
</dbReference>
<dbReference type="GO" id="GO:0030699">
    <property type="term" value="F:glycine reductase activity"/>
    <property type="evidence" value="ECO:0007669"/>
    <property type="project" value="UniProtKB-EC"/>
</dbReference>
<dbReference type="InterPro" id="IPR010186">
    <property type="entry name" value="Gly_red_sel_B"/>
</dbReference>
<dbReference type="InterPro" id="IPR010187">
    <property type="entry name" value="Various_sel_PB"/>
</dbReference>
<dbReference type="NCBIfam" id="TIGR01917">
    <property type="entry name" value="gly_red_sel_B"/>
    <property type="match status" value="1"/>
</dbReference>
<dbReference type="NCBIfam" id="TIGR01918">
    <property type="entry name" value="various_sel_PB"/>
    <property type="match status" value="1"/>
</dbReference>
<dbReference type="Pfam" id="PF07355">
    <property type="entry name" value="GRDB"/>
    <property type="match status" value="1"/>
</dbReference>
<comment type="function">
    <text>In the first step of glycine reductase, the substrate is bound to component PB via a Schiff base intermediate. Then the PB-activated substrate is nucleophilically attacked by the selenol anion of component PA to transform it to a carboxymethylated selenoether and the respective amine. By action of component PC, acetyl phosphate is formed, leaving component PA in its oxidized state. Finally component PA becomes reduced by the thioredoxin system to start a new catalytic cycle of reductive deamination.</text>
</comment>
<comment type="catalytic activity">
    <reaction>
        <text>acetyl phosphate + [thioredoxin]-disulfide + NH4(+) + H2O = [thioredoxin]-dithiol + glycine + phosphate + H(+)</text>
        <dbReference type="Rhea" id="RHEA:12232"/>
        <dbReference type="Rhea" id="RHEA-COMP:10698"/>
        <dbReference type="Rhea" id="RHEA-COMP:10700"/>
        <dbReference type="ChEBI" id="CHEBI:15377"/>
        <dbReference type="ChEBI" id="CHEBI:15378"/>
        <dbReference type="ChEBI" id="CHEBI:22191"/>
        <dbReference type="ChEBI" id="CHEBI:28938"/>
        <dbReference type="ChEBI" id="CHEBI:29950"/>
        <dbReference type="ChEBI" id="CHEBI:43474"/>
        <dbReference type="ChEBI" id="CHEBI:50058"/>
        <dbReference type="ChEBI" id="CHEBI:57305"/>
        <dbReference type="EC" id="1.21.4.2"/>
    </reaction>
</comment>
<comment type="subunit">
    <text>Heterohexamer of two alpha, two beta and two gamma subunits. Component of the glycine reductase complex, together with components A and C. PB is substrate specific.</text>
</comment>
<comment type="similarity">
    <text evidence="1">Belongs to the GrdB/GrdF/GrdH family.</text>
</comment>
<accession>P52217</accession>
<proteinExistence type="inferred from homology"/>
<sequence length="436" mass="46600">MGKLRVVHYINQFFAGIGGEEKADIAPFVAEELPPISQNLDKLLGEDAEVVATVVCGDSFFGENLETAQATVLEMVKGASPDLFIAGPAFNAGRYGVAAGAITKAVQDTLGIPAVTGMYIENPGADMYKKSVYVMSTADSAAGMRKSLPALAKFALKYAKGEEIGSPAEEGYIERGIRVNGFKEDRGAKRAVAMLVKKLKGEEFVTEYPMPVFDNVVPGRAIVNMSKAKIAIVTSGGIVPKGNPDRIESSSASKYGKYDIDGVDDLTSEGWETAHGGHDPVYANEDADRVIPVDVLRDMEKEGVIGELHRYFYSTTGNGTAVLSSKQFAKEFTQELMAAGVDAVILTSTUGTCTRCGATMVKEIERSGIPVVHICTVTPIALTVGANRIVPAIAIPHPLGDPALSPAEEKALRRKIVEKSLKALETEIEEQTVFED</sequence>
<protein>
    <recommendedName>
        <fullName>Glycine reductase complex component B subunit gamma</fullName>
        <ecNumber>1.21.4.2</ecNumber>
    </recommendedName>
    <alternativeName>
        <fullName>Selenoprotein PB gamma</fullName>
    </alternativeName>
</protein>
<name>GRDB_PEPLI</name>
<organism>
    <name type="scientific">Peptoclostridium litorale</name>
    <name type="common">Clostridium litorale</name>
    <dbReference type="NCBI Taxonomy" id="1557"/>
    <lineage>
        <taxon>Bacteria</taxon>
        <taxon>Bacillati</taxon>
        <taxon>Bacillota</taxon>
        <taxon>Clostridia</taxon>
        <taxon>Peptostreptococcales</taxon>
        <taxon>Peptoclostridiaceae</taxon>
        <taxon>Peptoclostridium</taxon>
    </lineage>
</organism>
<feature type="chain" id="PRO_0000087598" description="Glycine reductase complex component B subunit gamma">
    <location>
        <begin position="1"/>
        <end position="436"/>
    </location>
</feature>
<feature type="active site">
    <location>
        <position position="350"/>
    </location>
</feature>
<feature type="non-standard amino acid" description="Selenocysteine">
    <location>
        <position position="350"/>
    </location>
</feature>
<reference key="1">
    <citation type="journal article" date="1995" name="Eur. J. Biochem.">
        <title>Glycine reductase of Clostridium litorale. Cloning, sequencing, and molecular analysis of the grdAB operon that contains two in-frame TGA codons for selenium incorporation.</title>
        <authorList>
            <person name="Kreimer S."/>
            <person name="Andreesen J.R."/>
        </authorList>
    </citation>
    <scope>NUCLEOTIDE SEQUENCE [GENOMIC DNA]</scope>
    <source>
        <strain>ATCC 49638 / DSM 5388 / W6</strain>
    </source>
</reference>